<dbReference type="EC" id="5.3.1.28" evidence="1"/>
<dbReference type="EMBL" id="CP001110">
    <property type="protein sequence ID" value="ACF44868.1"/>
    <property type="molecule type" value="Genomic_DNA"/>
</dbReference>
<dbReference type="RefSeq" id="WP_012509340.1">
    <property type="nucleotide sequence ID" value="NC_011060.1"/>
</dbReference>
<dbReference type="SMR" id="B4SGD2"/>
<dbReference type="STRING" id="324925.Ppha_2710"/>
<dbReference type="KEGG" id="pph:Ppha_2710"/>
<dbReference type="eggNOG" id="COG0279">
    <property type="taxonomic scope" value="Bacteria"/>
</dbReference>
<dbReference type="HOGENOM" id="CLU_080999_4_0_10"/>
<dbReference type="OrthoDB" id="9781311at2"/>
<dbReference type="UniPathway" id="UPA00041">
    <property type="reaction ID" value="UER00436"/>
</dbReference>
<dbReference type="Proteomes" id="UP000002724">
    <property type="component" value="Chromosome"/>
</dbReference>
<dbReference type="GO" id="GO:0005737">
    <property type="term" value="C:cytoplasm"/>
    <property type="evidence" value="ECO:0007669"/>
    <property type="project" value="UniProtKB-SubCell"/>
</dbReference>
<dbReference type="GO" id="GO:0097367">
    <property type="term" value="F:carbohydrate derivative binding"/>
    <property type="evidence" value="ECO:0007669"/>
    <property type="project" value="InterPro"/>
</dbReference>
<dbReference type="GO" id="GO:0008968">
    <property type="term" value="F:D-sedoheptulose 7-phosphate isomerase activity"/>
    <property type="evidence" value="ECO:0007669"/>
    <property type="project" value="UniProtKB-UniRule"/>
</dbReference>
<dbReference type="GO" id="GO:0008270">
    <property type="term" value="F:zinc ion binding"/>
    <property type="evidence" value="ECO:0007669"/>
    <property type="project" value="UniProtKB-UniRule"/>
</dbReference>
<dbReference type="GO" id="GO:0005975">
    <property type="term" value="P:carbohydrate metabolic process"/>
    <property type="evidence" value="ECO:0007669"/>
    <property type="project" value="UniProtKB-UniRule"/>
</dbReference>
<dbReference type="GO" id="GO:2001061">
    <property type="term" value="P:D-glycero-D-manno-heptose 7-phosphate biosynthetic process"/>
    <property type="evidence" value="ECO:0007669"/>
    <property type="project" value="UniProtKB-UniPathway"/>
</dbReference>
<dbReference type="CDD" id="cd05006">
    <property type="entry name" value="SIS_GmhA"/>
    <property type="match status" value="1"/>
</dbReference>
<dbReference type="Gene3D" id="3.40.50.10490">
    <property type="entry name" value="Glucose-6-phosphate isomerase like protein, domain 1"/>
    <property type="match status" value="1"/>
</dbReference>
<dbReference type="HAMAP" id="MF_00067">
    <property type="entry name" value="GmhA"/>
    <property type="match status" value="1"/>
</dbReference>
<dbReference type="InterPro" id="IPR035461">
    <property type="entry name" value="GmhA/DiaA"/>
</dbReference>
<dbReference type="InterPro" id="IPR004515">
    <property type="entry name" value="Phosphoheptose_Isoase"/>
</dbReference>
<dbReference type="InterPro" id="IPR001347">
    <property type="entry name" value="SIS_dom"/>
</dbReference>
<dbReference type="InterPro" id="IPR046348">
    <property type="entry name" value="SIS_dom_sf"/>
</dbReference>
<dbReference type="InterPro" id="IPR050099">
    <property type="entry name" value="SIS_GmhA/DiaA_subfam"/>
</dbReference>
<dbReference type="NCBIfam" id="TIGR00441">
    <property type="entry name" value="gmhA"/>
    <property type="match status" value="1"/>
</dbReference>
<dbReference type="PANTHER" id="PTHR30390">
    <property type="entry name" value="SEDOHEPTULOSE 7-PHOSPHATE ISOMERASE / DNAA INITIATOR-ASSOCIATING FACTOR FOR REPLICATION INITIATION"/>
    <property type="match status" value="1"/>
</dbReference>
<dbReference type="Pfam" id="PF13580">
    <property type="entry name" value="SIS_2"/>
    <property type="match status" value="1"/>
</dbReference>
<dbReference type="SUPFAM" id="SSF53697">
    <property type="entry name" value="SIS domain"/>
    <property type="match status" value="1"/>
</dbReference>
<dbReference type="PROSITE" id="PS51464">
    <property type="entry name" value="SIS"/>
    <property type="match status" value="1"/>
</dbReference>
<protein>
    <recommendedName>
        <fullName evidence="1">Phosphoheptose isomerase</fullName>
        <ecNumber evidence="1">5.3.1.28</ecNumber>
    </recommendedName>
    <alternativeName>
        <fullName evidence="1">Sedoheptulose 7-phosphate isomerase</fullName>
    </alternativeName>
</protein>
<accession>B4SGD2</accession>
<gene>
    <name evidence="1" type="primary">gmhA</name>
    <name type="ordered locus">Ppha_2710</name>
</gene>
<comment type="function">
    <text evidence="1">Catalyzes the isomerization of sedoheptulose 7-phosphate in D-glycero-D-manno-heptose 7-phosphate.</text>
</comment>
<comment type="catalytic activity">
    <reaction evidence="1">
        <text>2 D-sedoheptulose 7-phosphate = D-glycero-alpha-D-manno-heptose 7-phosphate + D-glycero-beta-D-manno-heptose 7-phosphate</text>
        <dbReference type="Rhea" id="RHEA:27489"/>
        <dbReference type="ChEBI" id="CHEBI:57483"/>
        <dbReference type="ChEBI" id="CHEBI:60203"/>
        <dbReference type="ChEBI" id="CHEBI:60204"/>
        <dbReference type="EC" id="5.3.1.28"/>
    </reaction>
</comment>
<comment type="cofactor">
    <cofactor evidence="1">
        <name>Zn(2+)</name>
        <dbReference type="ChEBI" id="CHEBI:29105"/>
    </cofactor>
    <text evidence="1">Binds 1 zinc ion per subunit.</text>
</comment>
<comment type="pathway">
    <text evidence="1">Carbohydrate biosynthesis; D-glycero-D-manno-heptose 7-phosphate biosynthesis; D-glycero-alpha-D-manno-heptose 7-phosphate and D-glycero-beta-D-manno-heptose 7-phosphate from sedoheptulose 7-phosphate: step 1/1.</text>
</comment>
<comment type="subcellular location">
    <subcellularLocation>
        <location evidence="1">Cytoplasm</location>
    </subcellularLocation>
</comment>
<comment type="miscellaneous">
    <text evidence="1">The reaction produces a racemic mixture of D-glycero-alpha-D-manno-heptose 7-phosphate and D-glycero-beta-D-manno-heptose 7-phosphate.</text>
</comment>
<comment type="similarity">
    <text evidence="1">Belongs to the SIS family. GmhA subfamily.</text>
</comment>
<keyword id="KW-0119">Carbohydrate metabolism</keyword>
<keyword id="KW-0963">Cytoplasm</keyword>
<keyword id="KW-0413">Isomerase</keyword>
<keyword id="KW-0479">Metal-binding</keyword>
<keyword id="KW-1185">Reference proteome</keyword>
<keyword id="KW-0862">Zinc</keyword>
<proteinExistence type="inferred from homology"/>
<sequence length="211" mass="22347">MIKGCGCSDGLTDRTRYEEVVLDTMLYSAQLKERVARQNSAVIVAMARMIAGTFEDGGKVLLCGNGGSAADAQHLATELTIRYRSSVERPALPAIALSTDTSALTAGANDLGYDAVFARLVEAYGREGDILLGLSTSGNSQSVINALDFARQQGMKTLALLGGNGGLMKGLADLELIVPHSGSADRVQECHITIGHVLIDLVERMLGYCRL</sequence>
<feature type="chain" id="PRO_1000092283" description="Phosphoheptose isomerase">
    <location>
        <begin position="1"/>
        <end position="211"/>
    </location>
</feature>
<feature type="domain" description="SIS" evidence="1">
    <location>
        <begin position="50"/>
        <end position="211"/>
    </location>
</feature>
<feature type="binding site" evidence="1">
    <location>
        <begin position="65"/>
        <end position="67"/>
    </location>
    <ligand>
        <name>substrate</name>
    </ligand>
</feature>
<feature type="binding site" evidence="1">
    <location>
        <position position="74"/>
    </location>
    <ligand>
        <name>Zn(2+)</name>
        <dbReference type="ChEBI" id="CHEBI:29105"/>
    </ligand>
</feature>
<feature type="binding site" evidence="1">
    <location>
        <position position="78"/>
    </location>
    <ligand>
        <name>substrate</name>
    </ligand>
</feature>
<feature type="binding site" evidence="1">
    <location>
        <position position="78"/>
    </location>
    <ligand>
        <name>Zn(2+)</name>
        <dbReference type="ChEBI" id="CHEBI:29105"/>
    </ligand>
</feature>
<feature type="binding site" evidence="1">
    <location>
        <begin position="109"/>
        <end position="110"/>
    </location>
    <ligand>
        <name>substrate</name>
    </ligand>
</feature>
<feature type="binding site" evidence="1">
    <location>
        <begin position="135"/>
        <end position="137"/>
    </location>
    <ligand>
        <name>substrate</name>
    </ligand>
</feature>
<feature type="binding site" evidence="1">
    <location>
        <position position="140"/>
    </location>
    <ligand>
        <name>substrate</name>
    </ligand>
</feature>
<feature type="binding site" evidence="1">
    <location>
        <position position="188"/>
    </location>
    <ligand>
        <name>substrate</name>
    </ligand>
</feature>
<feature type="binding site" evidence="1">
    <location>
        <position position="188"/>
    </location>
    <ligand>
        <name>Zn(2+)</name>
        <dbReference type="ChEBI" id="CHEBI:29105"/>
    </ligand>
</feature>
<feature type="binding site" evidence="1">
    <location>
        <position position="196"/>
    </location>
    <ligand>
        <name>Zn(2+)</name>
        <dbReference type="ChEBI" id="CHEBI:29105"/>
    </ligand>
</feature>
<evidence type="ECO:0000255" key="1">
    <source>
        <dbReference type="HAMAP-Rule" id="MF_00067"/>
    </source>
</evidence>
<name>GMHA_PELPB</name>
<organism>
    <name type="scientific">Pelodictyon phaeoclathratiforme (strain DSM 5477 / BU-1)</name>
    <dbReference type="NCBI Taxonomy" id="324925"/>
    <lineage>
        <taxon>Bacteria</taxon>
        <taxon>Pseudomonadati</taxon>
        <taxon>Chlorobiota</taxon>
        <taxon>Chlorobiia</taxon>
        <taxon>Chlorobiales</taxon>
        <taxon>Chlorobiaceae</taxon>
        <taxon>Chlorobium/Pelodictyon group</taxon>
        <taxon>Pelodictyon</taxon>
    </lineage>
</organism>
<reference key="1">
    <citation type="submission" date="2008-06" db="EMBL/GenBank/DDBJ databases">
        <title>Complete sequence of Pelodictyon phaeoclathratiforme BU-1.</title>
        <authorList>
            <consortium name="US DOE Joint Genome Institute"/>
            <person name="Lucas S."/>
            <person name="Copeland A."/>
            <person name="Lapidus A."/>
            <person name="Glavina del Rio T."/>
            <person name="Dalin E."/>
            <person name="Tice H."/>
            <person name="Bruce D."/>
            <person name="Goodwin L."/>
            <person name="Pitluck S."/>
            <person name="Schmutz J."/>
            <person name="Larimer F."/>
            <person name="Land M."/>
            <person name="Hauser L."/>
            <person name="Kyrpides N."/>
            <person name="Mikhailova N."/>
            <person name="Liu Z."/>
            <person name="Li T."/>
            <person name="Zhao F."/>
            <person name="Overmann J."/>
            <person name="Bryant D.A."/>
            <person name="Richardson P."/>
        </authorList>
    </citation>
    <scope>NUCLEOTIDE SEQUENCE [LARGE SCALE GENOMIC DNA]</scope>
    <source>
        <strain>DSM 5477 / BU-1</strain>
    </source>
</reference>